<proteinExistence type="evidence at protein level"/>
<protein>
    <recommendedName>
        <fullName>Cysteine-rich venom protein 24</fullName>
    </recommendedName>
    <alternativeName>
        <fullName>CRVP-24k</fullName>
    </alternativeName>
</protein>
<feature type="chain" id="PRO_0000231639" description="Cysteine-rich venom protein 24">
    <location>
        <begin position="1"/>
        <end position="23" status="greater than"/>
    </location>
</feature>
<feature type="region of interest" description="Disordered" evidence="3">
    <location>
        <begin position="1"/>
        <end position="23"/>
    </location>
</feature>
<feature type="compositionally biased region" description="Basic and acidic residues" evidence="3">
    <location>
        <begin position="8"/>
        <end position="23"/>
    </location>
</feature>
<feature type="non-terminal residue" evidence="5">
    <location>
        <position position="23"/>
    </location>
</feature>
<organism>
    <name type="scientific">Naja kaouthia</name>
    <name type="common">Monocled cobra</name>
    <name type="synonym">Naja siamensis</name>
    <dbReference type="NCBI Taxonomy" id="8649"/>
    <lineage>
        <taxon>Eukaryota</taxon>
        <taxon>Metazoa</taxon>
        <taxon>Chordata</taxon>
        <taxon>Craniata</taxon>
        <taxon>Vertebrata</taxon>
        <taxon>Euteleostomi</taxon>
        <taxon>Lepidosauria</taxon>
        <taxon>Squamata</taxon>
        <taxon>Bifurcata</taxon>
        <taxon>Unidentata</taxon>
        <taxon>Episquamata</taxon>
        <taxon>Toxicofera</taxon>
        <taxon>Serpentes</taxon>
        <taxon>Colubroidea</taxon>
        <taxon>Elapidae</taxon>
        <taxon>Elapinae</taxon>
        <taxon>Naja</taxon>
    </lineage>
</organism>
<evidence type="ECO:0000250" key="1">
    <source>
        <dbReference type="UniProtKB" id="P84808"/>
    </source>
</evidence>
<evidence type="ECO:0000255" key="2"/>
<evidence type="ECO:0000256" key="3">
    <source>
        <dbReference type="SAM" id="MobiDB-lite"/>
    </source>
</evidence>
<evidence type="ECO:0000269" key="4">
    <source>
    </source>
</evidence>
<evidence type="ECO:0000303" key="5">
    <source>
    </source>
</evidence>
<evidence type="ECO:0000305" key="6"/>
<reference evidence="6" key="1">
    <citation type="journal article" date="2005" name="Biochem. Biophys. Res. Commun.">
        <title>Cobra venom contains a pool of cysteine-rich secretory proteins.</title>
        <authorList>
            <person name="Osipov A.V."/>
            <person name="Levashov M.Y."/>
            <person name="Tsetlin V.I."/>
            <person name="Utkin Y.N."/>
        </authorList>
    </citation>
    <scope>PROTEIN SEQUENCE</scope>
    <scope>SUBCELLULAR LOCATION</scope>
    <scope>TISSUE SPECIFICITY</scope>
    <scope>MASS SPECTROMETRY</scope>
    <source>
        <tissue evidence="4">Venom</tissue>
    </source>
</reference>
<keyword id="KW-0903">Direct protein sequencing</keyword>
<keyword id="KW-1015">Disulfide bond</keyword>
<keyword id="KW-0964">Secreted</keyword>
<keyword id="KW-0800">Toxin</keyword>
<dbReference type="GO" id="GO:0005576">
    <property type="term" value="C:extracellular region"/>
    <property type="evidence" value="ECO:0000314"/>
    <property type="project" value="UniProtKB"/>
</dbReference>
<dbReference type="GO" id="GO:0090729">
    <property type="term" value="F:toxin activity"/>
    <property type="evidence" value="ECO:0007669"/>
    <property type="project" value="UniProtKB-KW"/>
</dbReference>
<dbReference type="GO" id="GO:0006952">
    <property type="term" value="P:defense response"/>
    <property type="evidence" value="ECO:0000314"/>
    <property type="project" value="UniProtKB"/>
</dbReference>
<sequence length="23" mass="2654">VDFASESXNKRENQQIVDKHNAL</sequence>
<accession>P84803</accession>
<comment type="subcellular location">
    <subcellularLocation>
        <location evidence="4">Secreted</location>
    </subcellularLocation>
</comment>
<comment type="tissue specificity">
    <text evidence="4">Expressed by the venom gland.</text>
</comment>
<comment type="PTM">
    <text evidence="1">Contains 8 disulfide bonds.</text>
</comment>
<comment type="mass spectrometry" mass="24080.0" method="MALDI" evidence="4">
    <text>It is not clear why there are two peaks for this protein.</text>
</comment>
<comment type="mass spectrometry" mass="24704.0" method="MALDI" evidence="4"/>
<comment type="miscellaneous">
    <text evidence="4">Not toxic when administered to cockroaches at doses up to 5 nmol/g.</text>
</comment>
<comment type="similarity">
    <text evidence="2">Belongs to the CRISP family.</text>
</comment>
<name>CRVPO_NAJKA</name>